<gene>
    <name type="primary">ccna2</name>
</gene>
<protein>
    <recommendedName>
        <fullName evidence="4">Cyclin-A2</fullName>
        <shortName evidence="3">Cyclin-A</shortName>
    </recommendedName>
</protein>
<name>CCNA2_XENLA</name>
<dbReference type="EMBL" id="X85746">
    <property type="protein sequence ID" value="CAA59748.1"/>
    <property type="molecule type" value="mRNA"/>
</dbReference>
<dbReference type="PIR" id="I51637">
    <property type="entry name" value="I51637"/>
</dbReference>
<dbReference type="SMR" id="P47827"/>
<dbReference type="AGR" id="Xenbase:XB-GENE-17342800"/>
<dbReference type="Xenbase" id="XB-GENE-17342800">
    <property type="gene designation" value="ccna2.S"/>
</dbReference>
<dbReference type="OMA" id="YCRAAQH"/>
<dbReference type="Proteomes" id="UP000186698">
    <property type="component" value="Unplaced"/>
</dbReference>
<dbReference type="GO" id="GO:0097124">
    <property type="term" value="C:cyclin A2-CDK2 complex"/>
    <property type="evidence" value="ECO:0000318"/>
    <property type="project" value="GO_Central"/>
</dbReference>
<dbReference type="GO" id="GO:0000307">
    <property type="term" value="C:cyclin-dependent protein kinase holoenzyme complex"/>
    <property type="evidence" value="ECO:0000250"/>
    <property type="project" value="UniProtKB"/>
</dbReference>
<dbReference type="GO" id="GO:0005737">
    <property type="term" value="C:cytoplasm"/>
    <property type="evidence" value="ECO:0000250"/>
    <property type="project" value="UniProtKB"/>
</dbReference>
<dbReference type="GO" id="GO:0005815">
    <property type="term" value="C:microtubule organizing center"/>
    <property type="evidence" value="ECO:0000318"/>
    <property type="project" value="GO_Central"/>
</dbReference>
<dbReference type="GO" id="GO:0005634">
    <property type="term" value="C:nucleus"/>
    <property type="evidence" value="ECO:0000250"/>
    <property type="project" value="UniProtKB"/>
</dbReference>
<dbReference type="GO" id="GO:0016538">
    <property type="term" value="F:cyclin-dependent protein serine/threonine kinase regulator activity"/>
    <property type="evidence" value="ECO:0000318"/>
    <property type="project" value="GO_Central"/>
</dbReference>
<dbReference type="GO" id="GO:0044843">
    <property type="term" value="P:cell cycle G1/S phase transition"/>
    <property type="evidence" value="ECO:0000250"/>
    <property type="project" value="UniProtKB"/>
</dbReference>
<dbReference type="GO" id="GO:0051301">
    <property type="term" value="P:cell division"/>
    <property type="evidence" value="ECO:0007669"/>
    <property type="project" value="UniProtKB-KW"/>
</dbReference>
<dbReference type="GO" id="GO:0000082">
    <property type="term" value="P:G1/S transition of mitotic cell cycle"/>
    <property type="evidence" value="ECO:0000318"/>
    <property type="project" value="GO_Central"/>
</dbReference>
<dbReference type="GO" id="GO:0000086">
    <property type="term" value="P:G2/M transition of mitotic cell cycle"/>
    <property type="evidence" value="ECO:0000250"/>
    <property type="project" value="UniProtKB"/>
</dbReference>
<dbReference type="CDD" id="cd20561">
    <property type="entry name" value="CYCLIN_CCNA2_rpt1"/>
    <property type="match status" value="1"/>
</dbReference>
<dbReference type="CDD" id="cd20564">
    <property type="entry name" value="CYCLIN_CCNA2_rpt2"/>
    <property type="match status" value="1"/>
</dbReference>
<dbReference type="FunFam" id="1.10.472.10:FF:000001">
    <property type="entry name" value="G2/mitotic-specific cyclin"/>
    <property type="match status" value="1"/>
</dbReference>
<dbReference type="Gene3D" id="1.10.472.10">
    <property type="entry name" value="Cyclin-like"/>
    <property type="match status" value="2"/>
</dbReference>
<dbReference type="InterPro" id="IPR039361">
    <property type="entry name" value="Cyclin"/>
</dbReference>
<dbReference type="InterPro" id="IPR032447">
    <property type="entry name" value="Cyclin-A_N"/>
</dbReference>
<dbReference type="InterPro" id="IPR013763">
    <property type="entry name" value="Cyclin-like_dom"/>
</dbReference>
<dbReference type="InterPro" id="IPR036915">
    <property type="entry name" value="Cyclin-like_sf"/>
</dbReference>
<dbReference type="InterPro" id="IPR046965">
    <property type="entry name" value="Cyclin_A/B-like"/>
</dbReference>
<dbReference type="InterPro" id="IPR004367">
    <property type="entry name" value="Cyclin_C-dom"/>
</dbReference>
<dbReference type="InterPro" id="IPR006671">
    <property type="entry name" value="Cyclin_N"/>
</dbReference>
<dbReference type="InterPro" id="IPR048258">
    <property type="entry name" value="Cyclins_cyclin-box"/>
</dbReference>
<dbReference type="PANTHER" id="PTHR10177">
    <property type="entry name" value="CYCLINS"/>
    <property type="match status" value="1"/>
</dbReference>
<dbReference type="Pfam" id="PF02984">
    <property type="entry name" value="Cyclin_C"/>
    <property type="match status" value="1"/>
</dbReference>
<dbReference type="Pfam" id="PF00134">
    <property type="entry name" value="Cyclin_N"/>
    <property type="match status" value="1"/>
</dbReference>
<dbReference type="Pfam" id="PF16500">
    <property type="entry name" value="Cyclin_N2"/>
    <property type="match status" value="1"/>
</dbReference>
<dbReference type="PIRSF" id="PIRSF001771">
    <property type="entry name" value="Cyclin_A_B_D_E"/>
    <property type="match status" value="1"/>
</dbReference>
<dbReference type="SMART" id="SM00385">
    <property type="entry name" value="CYCLIN"/>
    <property type="match status" value="2"/>
</dbReference>
<dbReference type="SMART" id="SM01332">
    <property type="entry name" value="Cyclin_C"/>
    <property type="match status" value="1"/>
</dbReference>
<dbReference type="SUPFAM" id="SSF47954">
    <property type="entry name" value="Cyclin-like"/>
    <property type="match status" value="2"/>
</dbReference>
<dbReference type="PROSITE" id="PS00292">
    <property type="entry name" value="CYCLINS"/>
    <property type="match status" value="1"/>
</dbReference>
<comment type="function">
    <text evidence="1">Cyclin which controls both the G1/S and the G2/M transition phases of the cell cycle. Functions through the formation of specific serine/threonine kinase holoenzyme complexes with the cyclin-dependent protein kinases CDK1 and CDK2. The cyclin subunit confers the substrate specificity of these complexes and differentially interacts with and activates CDK1 and CDK2 throughout the cell cycle.</text>
</comment>
<comment type="subunit">
    <text evidence="1">Interacts with the CDK1 and CDK2 protein kinases to form serine/threonine kinase holoenzyme complexes.</text>
</comment>
<comment type="subcellular location">
    <subcellularLocation>
        <location evidence="1">Nucleus</location>
    </subcellularLocation>
    <subcellularLocation>
        <location evidence="1">Cytoplasm</location>
    </subcellularLocation>
</comment>
<comment type="tissue specificity">
    <text evidence="2">Ubiquitous.</text>
</comment>
<comment type="developmental stage">
    <text evidence="2">Accumulates steadily during G2 and is abruptly destroyed at mitosis.</text>
</comment>
<comment type="similarity">
    <text evidence="4">Belongs to the cyclin family. Cyclin AB subfamily.</text>
</comment>
<evidence type="ECO:0000250" key="1">
    <source>
        <dbReference type="UniProtKB" id="P20248"/>
    </source>
</evidence>
<evidence type="ECO:0000269" key="2">
    <source>
    </source>
</evidence>
<evidence type="ECO:0000303" key="3">
    <source>
    </source>
</evidence>
<evidence type="ECO:0000305" key="4"/>
<sequence>MSDHLLRDEHQENVQPRKLLVPVGGRTVLGVLQENHRGPKALKVSKPALQQTQVLSVNHLGVNDENYGKIPARKAASKQPAFTIHVDEPDCATNKRKAVHKKTVQDENLQQLNSVLGSIGTRKPLHPIQIAMETSFGSPMDVSIVDEEQKVVGCNNVADYAKEIHTYLREMEVKCKPKAGYMQKQPDITGNMRAILVDWLVEVGEEYKLQNETLYLAVNYIDRFLSSMSVLRGKLQLVGTAAMLLASKFEEIYPPEVAEFVYITDDTYTKKQVLKMEHLVLKVLSFDLAAPTILQYLNQYFQIHPVSPKVESLSMFLGELSLVDADPFLRYLPSVVAAAAFVIANCTINERTWSDPLVEYTSYTLETLKPCILDLYQTYLSAASHQQQAVREKYKAPKNHAVSLIIPPESMSTFL</sequence>
<proteinExistence type="evidence at transcript level"/>
<keyword id="KW-0131">Cell cycle</keyword>
<keyword id="KW-0132">Cell division</keyword>
<keyword id="KW-0195">Cyclin</keyword>
<keyword id="KW-0963">Cytoplasm</keyword>
<keyword id="KW-0498">Mitosis</keyword>
<keyword id="KW-0539">Nucleus</keyword>
<keyword id="KW-1185">Reference proteome</keyword>
<organism>
    <name type="scientific">Xenopus laevis</name>
    <name type="common">African clawed frog</name>
    <dbReference type="NCBI Taxonomy" id="8355"/>
    <lineage>
        <taxon>Eukaryota</taxon>
        <taxon>Metazoa</taxon>
        <taxon>Chordata</taxon>
        <taxon>Craniata</taxon>
        <taxon>Vertebrata</taxon>
        <taxon>Euteleostomi</taxon>
        <taxon>Amphibia</taxon>
        <taxon>Batrachia</taxon>
        <taxon>Anura</taxon>
        <taxon>Pipoidea</taxon>
        <taxon>Pipidae</taxon>
        <taxon>Xenopodinae</taxon>
        <taxon>Xenopus</taxon>
        <taxon>Xenopus</taxon>
    </lineage>
</organism>
<reference key="1">
    <citation type="journal article" date="1995" name="Genes Dev.">
        <title>Identification of a developmental timer regulating the stability of embryonic cyclin A and a new somatic A-type cyclin at gastrulation.</title>
        <authorList>
            <person name="Howe J."/>
            <person name="Howell M."/>
            <person name="Hunt T."/>
            <person name="Newport J."/>
        </authorList>
    </citation>
    <scope>NUCLEOTIDE SEQUENCE [MRNA]</scope>
    <scope>TISSUE SPECIFICITY</scope>
    <scope>DEVELOPMENTAL STAGE</scope>
    <source>
        <tissue>Ovary</tissue>
    </source>
</reference>
<accession>P47827</accession>
<feature type="chain" id="PRO_0000080342" description="Cyclin-A2">
    <location>
        <begin position="1"/>
        <end position="415"/>
    </location>
</feature>